<accession>B1MW26</accession>
<keyword id="KW-0963">Cytoplasm</keyword>
<keyword id="KW-0488">Methylation</keyword>
<keyword id="KW-0648">Protein biosynthesis</keyword>
<keyword id="KW-1185">Reference proteome</keyword>
<dbReference type="EMBL" id="DQ489736">
    <property type="protein sequence ID" value="ACA83430.1"/>
    <property type="molecule type" value="Genomic_DNA"/>
</dbReference>
<dbReference type="RefSeq" id="WP_004899481.1">
    <property type="nucleotide sequence ID" value="NC_010471.1"/>
</dbReference>
<dbReference type="SMR" id="B1MW26"/>
<dbReference type="STRING" id="349519.LCK_01607"/>
<dbReference type="GeneID" id="61103229"/>
<dbReference type="KEGG" id="lci:LCK_01607"/>
<dbReference type="eggNOG" id="COG1186">
    <property type="taxonomic scope" value="Bacteria"/>
</dbReference>
<dbReference type="HOGENOM" id="CLU_036856_6_0_9"/>
<dbReference type="OrthoDB" id="9806673at2"/>
<dbReference type="Proteomes" id="UP000002166">
    <property type="component" value="Chromosome"/>
</dbReference>
<dbReference type="GO" id="GO:0005737">
    <property type="term" value="C:cytoplasm"/>
    <property type="evidence" value="ECO:0007669"/>
    <property type="project" value="UniProtKB-SubCell"/>
</dbReference>
<dbReference type="GO" id="GO:0016149">
    <property type="term" value="F:translation release factor activity, codon specific"/>
    <property type="evidence" value="ECO:0007669"/>
    <property type="project" value="UniProtKB-UniRule"/>
</dbReference>
<dbReference type="Gene3D" id="3.30.160.20">
    <property type="match status" value="1"/>
</dbReference>
<dbReference type="Gene3D" id="3.30.70.1660">
    <property type="match status" value="1"/>
</dbReference>
<dbReference type="Gene3D" id="1.20.58.410">
    <property type="entry name" value="Release factor"/>
    <property type="match status" value="1"/>
</dbReference>
<dbReference type="HAMAP" id="MF_00094">
    <property type="entry name" value="Rel_fac_2"/>
    <property type="match status" value="1"/>
</dbReference>
<dbReference type="InterPro" id="IPR005139">
    <property type="entry name" value="PCRF"/>
</dbReference>
<dbReference type="InterPro" id="IPR000352">
    <property type="entry name" value="Pep_chain_release_fac_I"/>
</dbReference>
<dbReference type="InterPro" id="IPR045853">
    <property type="entry name" value="Pep_chain_release_fac_I_sf"/>
</dbReference>
<dbReference type="InterPro" id="IPR004374">
    <property type="entry name" value="PrfB"/>
</dbReference>
<dbReference type="NCBIfam" id="TIGR00020">
    <property type="entry name" value="prfB"/>
    <property type="match status" value="1"/>
</dbReference>
<dbReference type="PANTHER" id="PTHR43116:SF3">
    <property type="entry name" value="CLASS I PEPTIDE CHAIN RELEASE FACTOR"/>
    <property type="match status" value="1"/>
</dbReference>
<dbReference type="PANTHER" id="PTHR43116">
    <property type="entry name" value="PEPTIDE CHAIN RELEASE FACTOR 2"/>
    <property type="match status" value="1"/>
</dbReference>
<dbReference type="Pfam" id="PF03462">
    <property type="entry name" value="PCRF"/>
    <property type="match status" value="1"/>
</dbReference>
<dbReference type="Pfam" id="PF00472">
    <property type="entry name" value="RF-1"/>
    <property type="match status" value="1"/>
</dbReference>
<dbReference type="SMART" id="SM00937">
    <property type="entry name" value="PCRF"/>
    <property type="match status" value="1"/>
</dbReference>
<dbReference type="SUPFAM" id="SSF75620">
    <property type="entry name" value="Release factor"/>
    <property type="match status" value="1"/>
</dbReference>
<dbReference type="PROSITE" id="PS00745">
    <property type="entry name" value="RF_PROK_I"/>
    <property type="match status" value="1"/>
</dbReference>
<name>RF2_LEUCK</name>
<protein>
    <recommendedName>
        <fullName evidence="1">Peptide chain release factor 2</fullName>
        <shortName evidence="1">RF-2</shortName>
    </recommendedName>
</protein>
<feature type="chain" id="PRO_1000093545" description="Peptide chain release factor 2">
    <location>
        <begin position="1"/>
        <end position="372"/>
    </location>
</feature>
<feature type="modified residue" description="N5-methylglutamine" evidence="1">
    <location>
        <position position="252"/>
    </location>
</feature>
<reference key="1">
    <citation type="journal article" date="2008" name="J. Bacteriol.">
        <title>Complete genome sequence of Leuconostoc citreum KM20.</title>
        <authorList>
            <person name="Kim J.F."/>
            <person name="Jeong H."/>
            <person name="Lee J.-S."/>
            <person name="Choi S.-H."/>
            <person name="Ha M."/>
            <person name="Hur C.-G."/>
            <person name="Kim J.-S."/>
            <person name="Lee S."/>
            <person name="Park H.-S."/>
            <person name="Park Y.-H."/>
            <person name="Oh T.K."/>
        </authorList>
    </citation>
    <scope>NUCLEOTIDE SEQUENCE [LARGE SCALE GENOMIC DNA]</scope>
    <source>
        <strain>KM20</strain>
    </source>
</reference>
<proteinExistence type="inferred from homology"/>
<gene>
    <name evidence="1" type="primary">prfB</name>
    <name type="ordered locus">LCK_01607</name>
</gene>
<comment type="function">
    <text evidence="1">Peptide chain release factor 2 directs the termination of translation in response to the peptide chain termination codons UGA and UAA.</text>
</comment>
<comment type="subcellular location">
    <subcellularLocation>
        <location evidence="1">Cytoplasm</location>
    </subcellularLocation>
</comment>
<comment type="PTM">
    <text evidence="1">Methylated by PrmC. Methylation increases the termination efficiency of RF2.</text>
</comment>
<comment type="similarity">
    <text evidence="1">Belongs to the prokaryotic/mitochondrial release factor family.</text>
</comment>
<sequence>MEIIDAKHALADIQENIARFQGTLDLEALTEEIADFENRMTEPGFWDDNTKAQKVIEENNVLKNRRDSFLNLTNQAEEIEVLIDMLAEDPGDVDTATELADSIAQAQKDVEAYNLEQLLTEPYDANNAILEVHPGSGGTESTDWGANLYRMYTRWAQQHGFQVDVLDYHAGDEAGIDSATIKITGHNAFGFLRSEKGVHRFVRISPFDSAGRRHTSFVSVDVMPELDDTIEVEVRDDDIKMDVFRSGGAGGQNVNKVSTGVRLTHEPTGIVVSSTVERTQYGNRDYAMKLLKSKLYQLELEKQEAERAALTGEKMENGWGSQIRSYVLHPYQMVKDHRTNYETNQPQQVLDGDLDPFINAYLQWQLSLKNPN</sequence>
<organism>
    <name type="scientific">Leuconostoc citreum (strain KM20)</name>
    <dbReference type="NCBI Taxonomy" id="349519"/>
    <lineage>
        <taxon>Bacteria</taxon>
        <taxon>Bacillati</taxon>
        <taxon>Bacillota</taxon>
        <taxon>Bacilli</taxon>
        <taxon>Lactobacillales</taxon>
        <taxon>Lactobacillaceae</taxon>
        <taxon>Leuconostoc</taxon>
    </lineage>
</organism>
<evidence type="ECO:0000255" key="1">
    <source>
        <dbReference type="HAMAP-Rule" id="MF_00094"/>
    </source>
</evidence>